<keyword id="KW-0030">Aminoacyl-tRNA synthetase</keyword>
<keyword id="KW-0067">ATP-binding</keyword>
<keyword id="KW-0963">Cytoplasm</keyword>
<keyword id="KW-0436">Ligase</keyword>
<keyword id="KW-0547">Nucleotide-binding</keyword>
<keyword id="KW-0648">Protein biosynthesis</keyword>
<keyword id="KW-1185">Reference proteome</keyword>
<accession>A5GIA4</accession>
<organism>
    <name type="scientific">Synechococcus sp. (strain WH7803)</name>
    <dbReference type="NCBI Taxonomy" id="32051"/>
    <lineage>
        <taxon>Bacteria</taxon>
        <taxon>Bacillati</taxon>
        <taxon>Cyanobacteriota</taxon>
        <taxon>Cyanophyceae</taxon>
        <taxon>Synechococcales</taxon>
        <taxon>Synechococcaceae</taxon>
        <taxon>Synechococcus</taxon>
    </lineage>
</organism>
<dbReference type="EC" id="6.1.1.21" evidence="1"/>
<dbReference type="EMBL" id="CT971583">
    <property type="protein sequence ID" value="CAK22669.1"/>
    <property type="molecule type" value="Genomic_DNA"/>
</dbReference>
<dbReference type="SMR" id="A5GIA4"/>
<dbReference type="STRING" id="32051.SynWH7803_0243"/>
<dbReference type="KEGG" id="syx:SynWH7803_0243"/>
<dbReference type="eggNOG" id="COG0124">
    <property type="taxonomic scope" value="Bacteria"/>
</dbReference>
<dbReference type="HOGENOM" id="CLU_025113_1_1_3"/>
<dbReference type="OrthoDB" id="9800814at2"/>
<dbReference type="Proteomes" id="UP000001566">
    <property type="component" value="Chromosome"/>
</dbReference>
<dbReference type="GO" id="GO:0005737">
    <property type="term" value="C:cytoplasm"/>
    <property type="evidence" value="ECO:0007669"/>
    <property type="project" value="UniProtKB-SubCell"/>
</dbReference>
<dbReference type="GO" id="GO:0005524">
    <property type="term" value="F:ATP binding"/>
    <property type="evidence" value="ECO:0007669"/>
    <property type="project" value="UniProtKB-UniRule"/>
</dbReference>
<dbReference type="GO" id="GO:0004821">
    <property type="term" value="F:histidine-tRNA ligase activity"/>
    <property type="evidence" value="ECO:0007669"/>
    <property type="project" value="UniProtKB-UniRule"/>
</dbReference>
<dbReference type="GO" id="GO:0006427">
    <property type="term" value="P:histidyl-tRNA aminoacylation"/>
    <property type="evidence" value="ECO:0007669"/>
    <property type="project" value="UniProtKB-UniRule"/>
</dbReference>
<dbReference type="CDD" id="cd00773">
    <property type="entry name" value="HisRS-like_core"/>
    <property type="match status" value="1"/>
</dbReference>
<dbReference type="CDD" id="cd00859">
    <property type="entry name" value="HisRS_anticodon"/>
    <property type="match status" value="1"/>
</dbReference>
<dbReference type="FunFam" id="3.30.930.10:FF:000005">
    <property type="entry name" value="Histidine--tRNA ligase"/>
    <property type="match status" value="1"/>
</dbReference>
<dbReference type="Gene3D" id="3.40.50.800">
    <property type="entry name" value="Anticodon-binding domain"/>
    <property type="match status" value="1"/>
</dbReference>
<dbReference type="Gene3D" id="3.30.930.10">
    <property type="entry name" value="Bira Bifunctional Protein, Domain 2"/>
    <property type="match status" value="1"/>
</dbReference>
<dbReference type="HAMAP" id="MF_00127">
    <property type="entry name" value="His_tRNA_synth"/>
    <property type="match status" value="1"/>
</dbReference>
<dbReference type="InterPro" id="IPR006195">
    <property type="entry name" value="aa-tRNA-synth_II"/>
</dbReference>
<dbReference type="InterPro" id="IPR045864">
    <property type="entry name" value="aa-tRNA-synth_II/BPL/LPL"/>
</dbReference>
<dbReference type="InterPro" id="IPR004154">
    <property type="entry name" value="Anticodon-bd"/>
</dbReference>
<dbReference type="InterPro" id="IPR036621">
    <property type="entry name" value="Anticodon-bd_dom_sf"/>
</dbReference>
<dbReference type="InterPro" id="IPR015807">
    <property type="entry name" value="His-tRNA-ligase"/>
</dbReference>
<dbReference type="InterPro" id="IPR041715">
    <property type="entry name" value="HisRS-like_core"/>
</dbReference>
<dbReference type="InterPro" id="IPR004516">
    <property type="entry name" value="HisRS/HisZ"/>
</dbReference>
<dbReference type="InterPro" id="IPR033656">
    <property type="entry name" value="HisRS_anticodon"/>
</dbReference>
<dbReference type="NCBIfam" id="TIGR00442">
    <property type="entry name" value="hisS"/>
    <property type="match status" value="1"/>
</dbReference>
<dbReference type="PANTHER" id="PTHR43707:SF1">
    <property type="entry name" value="HISTIDINE--TRNA LIGASE, MITOCHONDRIAL-RELATED"/>
    <property type="match status" value="1"/>
</dbReference>
<dbReference type="PANTHER" id="PTHR43707">
    <property type="entry name" value="HISTIDYL-TRNA SYNTHETASE"/>
    <property type="match status" value="1"/>
</dbReference>
<dbReference type="Pfam" id="PF03129">
    <property type="entry name" value="HGTP_anticodon"/>
    <property type="match status" value="1"/>
</dbReference>
<dbReference type="Pfam" id="PF13393">
    <property type="entry name" value="tRNA-synt_His"/>
    <property type="match status" value="1"/>
</dbReference>
<dbReference type="PIRSF" id="PIRSF001549">
    <property type="entry name" value="His-tRNA_synth"/>
    <property type="match status" value="1"/>
</dbReference>
<dbReference type="SUPFAM" id="SSF52954">
    <property type="entry name" value="Class II aaRS ABD-related"/>
    <property type="match status" value="1"/>
</dbReference>
<dbReference type="SUPFAM" id="SSF55681">
    <property type="entry name" value="Class II aaRS and biotin synthetases"/>
    <property type="match status" value="1"/>
</dbReference>
<dbReference type="PROSITE" id="PS50862">
    <property type="entry name" value="AA_TRNA_LIGASE_II"/>
    <property type="match status" value="1"/>
</dbReference>
<gene>
    <name evidence="1" type="primary">hisS</name>
    <name type="ordered locus">SynWH7803_0243</name>
</gene>
<protein>
    <recommendedName>
        <fullName evidence="1">Histidine--tRNA ligase</fullName>
        <ecNumber evidence="1">6.1.1.21</ecNumber>
    </recommendedName>
    <alternativeName>
        <fullName evidence="1">Histidyl-tRNA synthetase</fullName>
        <shortName evidence="1">HisRS</shortName>
    </alternativeName>
</protein>
<feature type="chain" id="PRO_1000016472" description="Histidine--tRNA ligase">
    <location>
        <begin position="1"/>
        <end position="441"/>
    </location>
</feature>
<proteinExistence type="inferred from homology"/>
<reference key="1">
    <citation type="submission" date="2006-05" db="EMBL/GenBank/DDBJ databases">
        <authorList>
            <consortium name="Genoscope"/>
        </authorList>
    </citation>
    <scope>NUCLEOTIDE SEQUENCE [LARGE SCALE GENOMIC DNA]</scope>
    <source>
        <strain>WH7803</strain>
    </source>
</reference>
<evidence type="ECO:0000255" key="1">
    <source>
        <dbReference type="HAMAP-Rule" id="MF_00127"/>
    </source>
</evidence>
<sequence>MSQLQSLRGMVDLLPEQTRRWQAVEAVARDHFRRAGVEEIRTPLLEVTELFARGIGEGTDVVGKEMYSFLDRGERSCTLRPEGTASVVRAAMQHGLLNQGAQKLWYAGPMFRYERPQAGRQRQFHQIGVECLGVSSARSDVEAIALAWDLLAALGVQGLELEINSLGTPEDRQCYRAELVAWLEARRDQLDADSQQRLTTNPLRILDSKNKATQALLADAPTLLEALSPESAQRFAQVQALLHQLGIPFKLNTRLVRGLDYYGHTAFEITSDQLGAQATVCGGGRYDGLVEQLGGPATPAIGWALGMERLLLVLEAAAKADPAGAAAQLTMSAPPEVYVVNRGEAAEAVALSLTRSLRLAGVAVELDGSGAAFGKQFKRADRSGAPWAAVIGDEEAASGVVCLKPLLREGGDQRLPLSDPAAIVTILHSAPKSSLESEEER</sequence>
<comment type="catalytic activity">
    <reaction evidence="1">
        <text>tRNA(His) + L-histidine + ATP = L-histidyl-tRNA(His) + AMP + diphosphate + H(+)</text>
        <dbReference type="Rhea" id="RHEA:17313"/>
        <dbReference type="Rhea" id="RHEA-COMP:9665"/>
        <dbReference type="Rhea" id="RHEA-COMP:9689"/>
        <dbReference type="ChEBI" id="CHEBI:15378"/>
        <dbReference type="ChEBI" id="CHEBI:30616"/>
        <dbReference type="ChEBI" id="CHEBI:33019"/>
        <dbReference type="ChEBI" id="CHEBI:57595"/>
        <dbReference type="ChEBI" id="CHEBI:78442"/>
        <dbReference type="ChEBI" id="CHEBI:78527"/>
        <dbReference type="ChEBI" id="CHEBI:456215"/>
        <dbReference type="EC" id="6.1.1.21"/>
    </reaction>
</comment>
<comment type="subunit">
    <text evidence="1">Homodimer.</text>
</comment>
<comment type="subcellular location">
    <subcellularLocation>
        <location evidence="1">Cytoplasm</location>
    </subcellularLocation>
</comment>
<comment type="similarity">
    <text evidence="1">Belongs to the class-II aminoacyl-tRNA synthetase family.</text>
</comment>
<name>SYH_SYNPW</name>